<evidence type="ECO:0000269" key="1">
    <source>
    </source>
</evidence>
<evidence type="ECO:0000269" key="2">
    <source>
    </source>
</evidence>
<evidence type="ECO:0000305" key="3"/>
<proteinExistence type="evidence at protein level"/>
<organism>
    <name type="scientific">Klebsiella oxytoca</name>
    <dbReference type="NCBI Taxonomy" id="571"/>
    <lineage>
        <taxon>Bacteria</taxon>
        <taxon>Pseudomonadati</taxon>
        <taxon>Pseudomonadota</taxon>
        <taxon>Gammaproteobacteria</taxon>
        <taxon>Enterobacterales</taxon>
        <taxon>Enterobacteriaceae</taxon>
        <taxon>Klebsiella/Raoultella group</taxon>
        <taxon>Klebsiella</taxon>
    </lineage>
</organism>
<accession>Q5EXK1</accession>
<dbReference type="EC" id="1.14.13.24"/>
<dbReference type="EMBL" id="AY648560">
    <property type="protein sequence ID" value="AAW63416.1"/>
    <property type="molecule type" value="Genomic_DNA"/>
</dbReference>
<dbReference type="SMR" id="Q5EXK1"/>
<dbReference type="STRING" id="571.AB185_16310"/>
<dbReference type="PATRIC" id="fig|571.110.peg.4032"/>
<dbReference type="eggNOG" id="COG0654">
    <property type="taxonomic scope" value="Bacteria"/>
</dbReference>
<dbReference type="BRENDA" id="1.14.13.24">
    <property type="organism ID" value="2811"/>
</dbReference>
<dbReference type="GO" id="GO:0018669">
    <property type="term" value="F:3-hydroxybenzoate 6-monooxygenase activity"/>
    <property type="evidence" value="ECO:0007669"/>
    <property type="project" value="UniProtKB-EC"/>
</dbReference>
<dbReference type="GO" id="GO:0071949">
    <property type="term" value="F:FAD binding"/>
    <property type="evidence" value="ECO:0007669"/>
    <property type="project" value="InterPro"/>
</dbReference>
<dbReference type="GO" id="GO:0009056">
    <property type="term" value="P:catabolic process"/>
    <property type="evidence" value="ECO:0007669"/>
    <property type="project" value="UniProtKB-KW"/>
</dbReference>
<dbReference type="FunFam" id="3.50.50.60:FF:000131">
    <property type="entry name" value="3-hydroxybenzoate 6-monooxygenase"/>
    <property type="match status" value="1"/>
</dbReference>
<dbReference type="Gene3D" id="3.50.50.60">
    <property type="entry name" value="FAD/NAD(P)-binding domain"/>
    <property type="match status" value="1"/>
</dbReference>
<dbReference type="InterPro" id="IPR002938">
    <property type="entry name" value="FAD-bd"/>
</dbReference>
<dbReference type="InterPro" id="IPR050493">
    <property type="entry name" value="FAD-dep_Monooxygenase_BioMet"/>
</dbReference>
<dbReference type="InterPro" id="IPR036188">
    <property type="entry name" value="FAD/NAD-bd_sf"/>
</dbReference>
<dbReference type="NCBIfam" id="NF006021">
    <property type="entry name" value="PRK08163.1"/>
    <property type="match status" value="1"/>
</dbReference>
<dbReference type="PANTHER" id="PTHR13789:SF318">
    <property type="entry name" value="GERANYLGERANYL DIPHOSPHATE REDUCTASE"/>
    <property type="match status" value="1"/>
</dbReference>
<dbReference type="PANTHER" id="PTHR13789">
    <property type="entry name" value="MONOOXYGENASE"/>
    <property type="match status" value="1"/>
</dbReference>
<dbReference type="Pfam" id="PF01494">
    <property type="entry name" value="FAD_binding_3"/>
    <property type="match status" value="1"/>
</dbReference>
<dbReference type="PRINTS" id="PR00420">
    <property type="entry name" value="RNGMNOXGNASE"/>
</dbReference>
<dbReference type="SUPFAM" id="SSF54373">
    <property type="entry name" value="FAD-linked reductases, C-terminal domain"/>
    <property type="match status" value="1"/>
</dbReference>
<dbReference type="SUPFAM" id="SSF51905">
    <property type="entry name" value="FAD/NAD(P)-binding domain"/>
    <property type="match status" value="1"/>
</dbReference>
<name>3HBH_KLEOX</name>
<feature type="chain" id="PRO_0000382698" description="3-hydroxybenzoate 6-hydroxylase">
    <location>
        <begin position="1"/>
        <end position="397"/>
    </location>
</feature>
<feature type="mutagenesis site" description="No activity." evidence="1">
    <original>R</original>
    <variation>E</variation>
    <location>
        <position position="169"/>
    </location>
</feature>
<sequence length="397" mass="43887">MAKVMRAIIVGGGIGGAATALSLARQGIKVMLLEKAHEIGEIGAGIQLGPNAFSALDSLGVGEVARQRAVFTDHITMMDAVNGEEVVHIETGQAFRDHFGGPYAVIHRVDIHATVWEAALTHPAVEYRTSTQVVDIRQTADDVTVFDDKGNSWTADILIGCDGGKSVVRQSLLGDSPRVTGHVVYRAVVDAADMPDDLRINAPVLWAGPHCHLVHYPLRGGKQYNLVVTFHSRQQEEWGVRDGSKEEVLSYFKGIHPRPRQMLDKPTSWRRWSTADREPVEKWGNDRITLVGDAAHPVAQYMAQGACMALEDAVTLGKALAQCDGDAARAFALYESVRIPRTARIVWSTREMGRVYHAAGVERQVRNLLWKGKTQSEFYRGIEWLYGWKEDNCLEAR</sequence>
<reference key="1">
    <citation type="journal article" date="2005" name="Microbiol. Res.">
        <title>Arg169 is essential for catalytic activity of 3-hydroxybenzoate 6-hydroxylase from Klebsiella pneumoniae M5a1.</title>
        <authorList>
            <person name="Liu D.Q."/>
            <person name="Liu H."/>
            <person name="Gao X.L."/>
            <person name="Leak D.J."/>
            <person name="Zhou N.Y."/>
        </authorList>
    </citation>
    <scope>NUCLEOTIDE SEQUENCE [GENOMIC DNA]</scope>
    <scope>MUTAGENESIS OF ARG-169</scope>
    <source>
        <strain>M5a1</strain>
    </source>
</reference>
<reference key="2">
    <citation type="journal article" date="1995" name="FEMS Microbiol. Lett.">
        <title>Purification and characterization of the 3-hydroxybenzoate-6-hydroxylase from Klebsiella pneumoniae.</title>
        <authorList>
            <person name="Suarez M."/>
            <person name="Ferrer E."/>
            <person name="Garrido-Pertierra A."/>
            <person name="Martin M."/>
        </authorList>
    </citation>
    <scope>CATALYTIC ACTIVITY</scope>
    <scope>COFACTOR</scope>
    <scope>SUBUNIT</scope>
    <scope>INDUCTION</scope>
    <scope>BIOPHYSICOCHEMICAL PROPERTIES</scope>
    <scope>ACTIVITY REGULATION</scope>
    <source>
        <strain>M5a1</strain>
    </source>
</reference>
<comment type="function">
    <text>Catalyzes the NAD- or NADP-dependent conversion of 3-hydroxybenzoate to gentisate. NAD and NADP function equally well.</text>
</comment>
<comment type="catalytic activity">
    <reaction evidence="2">
        <text>3-hydroxybenzoate + NADH + O2 + H(+) = 2,5-dihydroxybenzoate + NAD(+) + H2O</text>
        <dbReference type="Rhea" id="RHEA:22692"/>
        <dbReference type="ChEBI" id="CHEBI:15377"/>
        <dbReference type="ChEBI" id="CHEBI:15378"/>
        <dbReference type="ChEBI" id="CHEBI:15379"/>
        <dbReference type="ChEBI" id="CHEBI:16193"/>
        <dbReference type="ChEBI" id="CHEBI:57540"/>
        <dbReference type="ChEBI" id="CHEBI:57945"/>
        <dbReference type="ChEBI" id="CHEBI:58044"/>
        <dbReference type="EC" id="1.14.13.24"/>
    </reaction>
</comment>
<comment type="cofactor">
    <cofactor evidence="2">
        <name>FAD</name>
        <dbReference type="ChEBI" id="CHEBI:57692"/>
    </cofactor>
</comment>
<comment type="activity regulation">
    <text evidence="2">Inhibited by copper, mercury and iron ions.</text>
</comment>
<comment type="biophysicochemical properties">
    <kinetics>
        <KM evidence="2">70 uM for NADH</KM>
        <KM evidence="2">70 uM for NADPH</KM>
    </kinetics>
    <phDependence>
        <text evidence="2">Optimum pH is 8.</text>
    </phDependence>
    <temperatureDependence>
        <text evidence="2">Optimum temperature is 25-30 degrees Celsius.</text>
    </temperatureDependence>
</comment>
<comment type="subunit">
    <text evidence="2">Monomer.</text>
</comment>
<comment type="induction">
    <text evidence="2">By 3-hydroxybenzoate and 2,5-dihydroxybenzoate.</text>
</comment>
<comment type="similarity">
    <text evidence="3">Belongs to the 3-hydroxybenzoate 6-hydroxylase family.</text>
</comment>
<protein>
    <recommendedName>
        <fullName>3-hydroxybenzoate 6-hydroxylase</fullName>
        <ecNumber>1.14.13.24</ecNumber>
    </recommendedName>
</protein>
<gene>
    <name type="primary">mhbM</name>
</gene>
<keyword id="KW-0058">Aromatic hydrocarbons catabolism</keyword>
<keyword id="KW-0274">FAD</keyword>
<keyword id="KW-0285">Flavoprotein</keyword>
<keyword id="KW-0503">Monooxygenase</keyword>
<keyword id="KW-0520">NAD</keyword>
<keyword id="KW-0521">NADP</keyword>
<keyword id="KW-0560">Oxidoreductase</keyword>